<accession>Q8DCE5</accession>
<feature type="chain" id="PRO_0000165811" description="Probable cytosol aminopeptidase">
    <location>
        <begin position="1"/>
        <end position="502"/>
    </location>
</feature>
<feature type="active site" evidence="1">
    <location>
        <position position="281"/>
    </location>
</feature>
<feature type="active site" evidence="1">
    <location>
        <position position="355"/>
    </location>
</feature>
<feature type="binding site" evidence="1">
    <location>
        <position position="269"/>
    </location>
    <ligand>
        <name>Mn(2+)</name>
        <dbReference type="ChEBI" id="CHEBI:29035"/>
        <label>2</label>
    </ligand>
</feature>
<feature type="binding site" evidence="1">
    <location>
        <position position="274"/>
    </location>
    <ligand>
        <name>Mn(2+)</name>
        <dbReference type="ChEBI" id="CHEBI:29035"/>
        <label>1</label>
    </ligand>
</feature>
<feature type="binding site" evidence="1">
    <location>
        <position position="274"/>
    </location>
    <ligand>
        <name>Mn(2+)</name>
        <dbReference type="ChEBI" id="CHEBI:29035"/>
        <label>2</label>
    </ligand>
</feature>
<feature type="binding site" evidence="1">
    <location>
        <position position="292"/>
    </location>
    <ligand>
        <name>Mn(2+)</name>
        <dbReference type="ChEBI" id="CHEBI:29035"/>
        <label>2</label>
    </ligand>
</feature>
<feature type="binding site" evidence="1">
    <location>
        <position position="351"/>
    </location>
    <ligand>
        <name>Mn(2+)</name>
        <dbReference type="ChEBI" id="CHEBI:29035"/>
        <label>1</label>
    </ligand>
</feature>
<feature type="binding site" evidence="1">
    <location>
        <position position="353"/>
    </location>
    <ligand>
        <name>Mn(2+)</name>
        <dbReference type="ChEBI" id="CHEBI:29035"/>
        <label>1</label>
    </ligand>
</feature>
<feature type="binding site" evidence="1">
    <location>
        <position position="353"/>
    </location>
    <ligand>
        <name>Mn(2+)</name>
        <dbReference type="ChEBI" id="CHEBI:29035"/>
        <label>2</label>
    </ligand>
</feature>
<evidence type="ECO:0000255" key="1">
    <source>
        <dbReference type="HAMAP-Rule" id="MF_00181"/>
    </source>
</evidence>
<protein>
    <recommendedName>
        <fullName evidence="1">Probable cytosol aminopeptidase</fullName>
        <ecNumber evidence="1">3.4.11.1</ecNumber>
    </recommendedName>
    <alternativeName>
        <fullName evidence="1">Leucine aminopeptidase</fullName>
        <shortName evidence="1">LAP</shortName>
        <ecNumber evidence="1">3.4.11.10</ecNumber>
    </alternativeName>
    <alternativeName>
        <fullName evidence="1">Leucyl aminopeptidase</fullName>
    </alternativeName>
</protein>
<organism>
    <name type="scientific">Vibrio vulnificus (strain CMCP6)</name>
    <dbReference type="NCBI Taxonomy" id="216895"/>
    <lineage>
        <taxon>Bacteria</taxon>
        <taxon>Pseudomonadati</taxon>
        <taxon>Pseudomonadota</taxon>
        <taxon>Gammaproteobacteria</taxon>
        <taxon>Vibrionales</taxon>
        <taxon>Vibrionaceae</taxon>
        <taxon>Vibrio</taxon>
    </lineage>
</organism>
<dbReference type="EC" id="3.4.11.1" evidence="1"/>
<dbReference type="EC" id="3.4.11.10" evidence="1"/>
<dbReference type="EMBL" id="AE016795">
    <property type="protein sequence ID" value="AAO09915.1"/>
    <property type="molecule type" value="Genomic_DNA"/>
</dbReference>
<dbReference type="RefSeq" id="WP_011079433.1">
    <property type="nucleotide sequence ID" value="NC_004459.3"/>
</dbReference>
<dbReference type="SMR" id="Q8DCE5"/>
<dbReference type="MEROPS" id="M17.003"/>
<dbReference type="GeneID" id="93895736"/>
<dbReference type="KEGG" id="vvu:VV1_1476"/>
<dbReference type="HOGENOM" id="CLU_013734_2_2_6"/>
<dbReference type="Proteomes" id="UP000002275">
    <property type="component" value="Chromosome 1"/>
</dbReference>
<dbReference type="GO" id="GO:0005737">
    <property type="term" value="C:cytoplasm"/>
    <property type="evidence" value="ECO:0007669"/>
    <property type="project" value="UniProtKB-SubCell"/>
</dbReference>
<dbReference type="GO" id="GO:0030145">
    <property type="term" value="F:manganese ion binding"/>
    <property type="evidence" value="ECO:0007669"/>
    <property type="project" value="UniProtKB-UniRule"/>
</dbReference>
<dbReference type="GO" id="GO:0070006">
    <property type="term" value="F:metalloaminopeptidase activity"/>
    <property type="evidence" value="ECO:0007669"/>
    <property type="project" value="InterPro"/>
</dbReference>
<dbReference type="GO" id="GO:0006508">
    <property type="term" value="P:proteolysis"/>
    <property type="evidence" value="ECO:0007669"/>
    <property type="project" value="UniProtKB-KW"/>
</dbReference>
<dbReference type="CDD" id="cd00433">
    <property type="entry name" value="Peptidase_M17"/>
    <property type="match status" value="1"/>
</dbReference>
<dbReference type="FunFam" id="3.40.220.10:FF:000001">
    <property type="entry name" value="Probable cytosol aminopeptidase"/>
    <property type="match status" value="1"/>
</dbReference>
<dbReference type="FunFam" id="3.40.630.10:FF:000004">
    <property type="entry name" value="Probable cytosol aminopeptidase"/>
    <property type="match status" value="1"/>
</dbReference>
<dbReference type="Gene3D" id="3.40.220.10">
    <property type="entry name" value="Leucine Aminopeptidase, subunit E, domain 1"/>
    <property type="match status" value="1"/>
</dbReference>
<dbReference type="Gene3D" id="3.40.630.10">
    <property type="entry name" value="Zn peptidases"/>
    <property type="match status" value="1"/>
</dbReference>
<dbReference type="HAMAP" id="MF_00181">
    <property type="entry name" value="Cytosol_peptidase_M17"/>
    <property type="match status" value="1"/>
</dbReference>
<dbReference type="InterPro" id="IPR011356">
    <property type="entry name" value="Leucine_aapep/pepB"/>
</dbReference>
<dbReference type="InterPro" id="IPR043472">
    <property type="entry name" value="Macro_dom-like"/>
</dbReference>
<dbReference type="InterPro" id="IPR000819">
    <property type="entry name" value="Peptidase_M17_C"/>
</dbReference>
<dbReference type="InterPro" id="IPR023042">
    <property type="entry name" value="Peptidase_M17_leu_NH2_pept"/>
</dbReference>
<dbReference type="InterPro" id="IPR008283">
    <property type="entry name" value="Peptidase_M17_N"/>
</dbReference>
<dbReference type="NCBIfam" id="NF002072">
    <property type="entry name" value="PRK00913.1-1"/>
    <property type="match status" value="1"/>
</dbReference>
<dbReference type="NCBIfam" id="NF002073">
    <property type="entry name" value="PRK00913.1-2"/>
    <property type="match status" value="1"/>
</dbReference>
<dbReference type="NCBIfam" id="NF002074">
    <property type="entry name" value="PRK00913.1-4"/>
    <property type="match status" value="1"/>
</dbReference>
<dbReference type="PANTHER" id="PTHR11963:SF23">
    <property type="entry name" value="CYTOSOL AMINOPEPTIDASE"/>
    <property type="match status" value="1"/>
</dbReference>
<dbReference type="PANTHER" id="PTHR11963">
    <property type="entry name" value="LEUCINE AMINOPEPTIDASE-RELATED"/>
    <property type="match status" value="1"/>
</dbReference>
<dbReference type="Pfam" id="PF00883">
    <property type="entry name" value="Peptidase_M17"/>
    <property type="match status" value="1"/>
</dbReference>
<dbReference type="Pfam" id="PF02789">
    <property type="entry name" value="Peptidase_M17_N"/>
    <property type="match status" value="1"/>
</dbReference>
<dbReference type="PRINTS" id="PR00481">
    <property type="entry name" value="LAMNOPPTDASE"/>
</dbReference>
<dbReference type="SUPFAM" id="SSF52949">
    <property type="entry name" value="Macro domain-like"/>
    <property type="match status" value="1"/>
</dbReference>
<dbReference type="SUPFAM" id="SSF53187">
    <property type="entry name" value="Zn-dependent exopeptidases"/>
    <property type="match status" value="1"/>
</dbReference>
<dbReference type="PROSITE" id="PS00631">
    <property type="entry name" value="CYTOSOL_AP"/>
    <property type="match status" value="1"/>
</dbReference>
<gene>
    <name evidence="1" type="primary">pepA</name>
    <name type="ordered locus">VV1_1476</name>
</gene>
<keyword id="KW-0031">Aminopeptidase</keyword>
<keyword id="KW-0963">Cytoplasm</keyword>
<keyword id="KW-0378">Hydrolase</keyword>
<keyword id="KW-0464">Manganese</keyword>
<keyword id="KW-0479">Metal-binding</keyword>
<keyword id="KW-0645">Protease</keyword>
<sequence length="502" mass="54629">MEFSVKSGSPEKQRSACIVVGVFEPRRLSPVAEQLDKISDGYISSLLRRGDLEGKPGQMLLLHQVPGVLSERVLLVGCGKERELGERQYKEIIQKTINTLNETGSMEAVCFLTELHVKGRDTYWKVRQAVEATKDGLYTFDQFKSVKPETRRPLRKLVFNVPTRRELNLGEKAITHGLAIASGVKACKDLGNMPPNIANPAYLASQARRLADDYETITTKIIGEQEMEKLGMSSYLAVGRGSKNESMMSIIEYKGHPDSEAKPIVLVGKGLTFDSGGISLKPGEGMDEMKYDMCGAASVFGTMKALAKLNLPVNVIGVLAGCENMPGSNAYRPGDILTTMSGQTVEVLNTDAEGRLVLCDALTYVERFEPDCVVDVATLTGACVIALGHHITGVLSNHNPLAHELVNASEQSSDRAWRLPMADEYHEQLKSPFADMANIGGRPGGTITAACFLSKFAKKYNWAHLDIAGTAWKSGAAKGSTGRPVSMLVQFLLNRSGQETEE</sequence>
<reference key="1">
    <citation type="submission" date="2002-12" db="EMBL/GenBank/DDBJ databases">
        <title>Complete genome sequence of Vibrio vulnificus CMCP6.</title>
        <authorList>
            <person name="Rhee J.H."/>
            <person name="Kim S.Y."/>
            <person name="Chung S.S."/>
            <person name="Kim J.J."/>
            <person name="Moon Y.H."/>
            <person name="Jeong H."/>
            <person name="Choy H.E."/>
        </authorList>
    </citation>
    <scope>NUCLEOTIDE SEQUENCE [LARGE SCALE GENOMIC DNA]</scope>
    <source>
        <strain>CMCP6</strain>
    </source>
</reference>
<comment type="function">
    <text evidence="1">Presumably involved in the processing and regular turnover of intracellular proteins. Catalyzes the removal of unsubstituted N-terminal amino acids from various peptides.</text>
</comment>
<comment type="catalytic activity">
    <reaction evidence="1">
        <text>Release of an N-terminal amino acid, Xaa-|-Yaa-, in which Xaa is preferably Leu, but may be other amino acids including Pro although not Arg or Lys, and Yaa may be Pro. Amino acid amides and methyl esters are also readily hydrolyzed, but rates on arylamides are exceedingly low.</text>
        <dbReference type="EC" id="3.4.11.1"/>
    </reaction>
</comment>
<comment type="catalytic activity">
    <reaction evidence="1">
        <text>Release of an N-terminal amino acid, preferentially leucine, but not glutamic or aspartic acids.</text>
        <dbReference type="EC" id="3.4.11.10"/>
    </reaction>
</comment>
<comment type="cofactor">
    <cofactor evidence="1">
        <name>Mn(2+)</name>
        <dbReference type="ChEBI" id="CHEBI:29035"/>
    </cofactor>
    <text evidence="1">Binds 2 manganese ions per subunit.</text>
</comment>
<comment type="subcellular location">
    <subcellularLocation>
        <location evidence="1">Cytoplasm</location>
    </subcellularLocation>
</comment>
<comment type="similarity">
    <text evidence="1">Belongs to the peptidase M17 family.</text>
</comment>
<proteinExistence type="inferred from homology"/>
<name>AMPA_VIBVU</name>